<proteinExistence type="inferred from homology"/>
<keyword id="KW-0040">ANK repeat</keyword>
<keyword id="KW-0053">Apoptosis</keyword>
<keyword id="KW-0175">Coiled coil</keyword>
<keyword id="KW-0963">Cytoplasm</keyword>
<keyword id="KW-0488">Methylation</keyword>
<keyword id="KW-0496">Mitochondrion</keyword>
<keyword id="KW-0597">Phosphoprotein</keyword>
<keyword id="KW-1185">Reference proteome</keyword>
<keyword id="KW-0677">Repeat</keyword>
<keyword id="KW-0804">Transcription</keyword>
<keyword id="KW-0805">Transcription regulation</keyword>
<name>KANK2_DANRE</name>
<accession>X1WE18</accession>
<protein>
    <recommendedName>
        <fullName>KN motif and ankyrin repeat domain-containing protein 2</fullName>
    </recommendedName>
</protein>
<dbReference type="EMBL" id="CT583658">
    <property type="status" value="NOT_ANNOTATED_CDS"/>
    <property type="molecule type" value="Genomic_DNA"/>
</dbReference>
<dbReference type="EMBL" id="CU464181">
    <property type="status" value="NOT_ANNOTATED_CDS"/>
    <property type="molecule type" value="Genomic_DNA"/>
</dbReference>
<dbReference type="RefSeq" id="NP_001292549.1">
    <property type="nucleotide sequence ID" value="NM_001305620.1"/>
</dbReference>
<dbReference type="RefSeq" id="XP_005164396.1">
    <property type="nucleotide sequence ID" value="XM_005164339.5"/>
</dbReference>
<dbReference type="RefSeq" id="XP_021326843.1">
    <property type="nucleotide sequence ID" value="XM_021471168.2"/>
</dbReference>
<dbReference type="SMR" id="X1WE18"/>
<dbReference type="FunCoup" id="X1WE18">
    <property type="interactions" value="1583"/>
</dbReference>
<dbReference type="STRING" id="7955.ENSDARP00000128469"/>
<dbReference type="PaxDb" id="7955-ENSDARP00000128469"/>
<dbReference type="Ensembl" id="ENSDART00000154031">
    <property type="protein sequence ID" value="ENSDARP00000128469"/>
    <property type="gene ID" value="ENSDARG00000018393"/>
</dbReference>
<dbReference type="Ensembl" id="ENSDART00000179903">
    <property type="protein sequence ID" value="ENSDARP00000146055"/>
    <property type="gene ID" value="ENSDARG00000018393"/>
</dbReference>
<dbReference type="GeneID" id="571549"/>
<dbReference type="KEGG" id="dre:571549"/>
<dbReference type="AGR" id="ZFIN:ZDB-GENE-040724-121"/>
<dbReference type="CTD" id="25959"/>
<dbReference type="ZFIN" id="ZDB-GENE-040724-121">
    <property type="gene designation" value="kank2"/>
</dbReference>
<dbReference type="eggNOG" id="KOG0514">
    <property type="taxonomic scope" value="Eukaryota"/>
</dbReference>
<dbReference type="HOGENOM" id="CLU_004269_1_1_1"/>
<dbReference type="InParanoid" id="X1WE18"/>
<dbReference type="OMA" id="DTVVQKC"/>
<dbReference type="OrthoDB" id="5406014at2759"/>
<dbReference type="PRO" id="PR:X1WE18"/>
<dbReference type="Proteomes" id="UP000000437">
    <property type="component" value="Chromosome 3"/>
</dbReference>
<dbReference type="Bgee" id="ENSDARG00000018393">
    <property type="expression patterns" value="Expressed in swim bladder and 20 other cell types or tissues"/>
</dbReference>
<dbReference type="GO" id="GO:0005737">
    <property type="term" value="C:cytoplasm"/>
    <property type="evidence" value="ECO:0000318"/>
    <property type="project" value="GO_Central"/>
</dbReference>
<dbReference type="GO" id="GO:0005739">
    <property type="term" value="C:mitochondrion"/>
    <property type="evidence" value="ECO:0007669"/>
    <property type="project" value="UniProtKB-SubCell"/>
</dbReference>
<dbReference type="GO" id="GO:0006915">
    <property type="term" value="P:apoptotic process"/>
    <property type="evidence" value="ECO:0007669"/>
    <property type="project" value="UniProtKB-KW"/>
</dbReference>
<dbReference type="GO" id="GO:0032836">
    <property type="term" value="P:glomerular basement membrane development"/>
    <property type="evidence" value="ECO:0000315"/>
    <property type="project" value="ZFIN"/>
</dbReference>
<dbReference type="GO" id="GO:0030837">
    <property type="term" value="P:negative regulation of actin filament polymerization"/>
    <property type="evidence" value="ECO:0007669"/>
    <property type="project" value="InterPro"/>
</dbReference>
<dbReference type="GO" id="GO:0008285">
    <property type="term" value="P:negative regulation of cell population proliferation"/>
    <property type="evidence" value="ECO:0000318"/>
    <property type="project" value="GO_Central"/>
</dbReference>
<dbReference type="GO" id="GO:2000134">
    <property type="term" value="P:negative regulation of G1/S transition of mitotic cell cycle"/>
    <property type="evidence" value="ECO:0000318"/>
    <property type="project" value="GO_Central"/>
</dbReference>
<dbReference type="GO" id="GO:0033147">
    <property type="term" value="P:negative regulation of intracellular estrogen receptor signaling pathway"/>
    <property type="evidence" value="ECO:0000318"/>
    <property type="project" value="GO_Central"/>
</dbReference>
<dbReference type="GO" id="GO:0000122">
    <property type="term" value="P:negative regulation of transcription by RNA polymerase II"/>
    <property type="evidence" value="ECO:0000318"/>
    <property type="project" value="GO_Central"/>
</dbReference>
<dbReference type="GO" id="GO:0070563">
    <property type="term" value="P:negative regulation of vitamin D receptor signaling pathway"/>
    <property type="evidence" value="ECO:0000318"/>
    <property type="project" value="GO_Central"/>
</dbReference>
<dbReference type="GO" id="GO:0072015">
    <property type="term" value="P:podocyte development"/>
    <property type="evidence" value="ECO:0000315"/>
    <property type="project" value="ZFIN"/>
</dbReference>
<dbReference type="GO" id="GO:0035023">
    <property type="term" value="P:regulation of Rho protein signal transduction"/>
    <property type="evidence" value="ECO:0000250"/>
    <property type="project" value="UniProtKB"/>
</dbReference>
<dbReference type="FunFam" id="1.25.40.20:FF:000017">
    <property type="entry name" value="KN motif and ankyrin repeat domain-containing protein 1"/>
    <property type="match status" value="1"/>
</dbReference>
<dbReference type="Gene3D" id="1.25.40.20">
    <property type="entry name" value="Ankyrin repeat-containing domain"/>
    <property type="match status" value="1"/>
</dbReference>
<dbReference type="InterPro" id="IPR002110">
    <property type="entry name" value="Ankyrin_rpt"/>
</dbReference>
<dbReference type="InterPro" id="IPR036770">
    <property type="entry name" value="Ankyrin_rpt-contain_sf"/>
</dbReference>
<dbReference type="InterPro" id="IPR047184">
    <property type="entry name" value="KANK1-4"/>
</dbReference>
<dbReference type="InterPro" id="IPR021939">
    <property type="entry name" value="KN_motif"/>
</dbReference>
<dbReference type="PANTHER" id="PTHR24168">
    <property type="entry name" value="KN MOTIF AND ANKYRIN REPEAT DOMAIN-CONTAINING"/>
    <property type="match status" value="1"/>
</dbReference>
<dbReference type="PANTHER" id="PTHR24168:SF0">
    <property type="entry name" value="KN MOTIF AND ANKYRIN REPEAT DOMAIN-CONTAINING PROTEIN 2"/>
    <property type="match status" value="1"/>
</dbReference>
<dbReference type="Pfam" id="PF12796">
    <property type="entry name" value="Ank_2"/>
    <property type="match status" value="2"/>
</dbReference>
<dbReference type="Pfam" id="PF12075">
    <property type="entry name" value="KN_motif"/>
    <property type="match status" value="1"/>
</dbReference>
<dbReference type="SMART" id="SM00248">
    <property type="entry name" value="ANK"/>
    <property type="match status" value="5"/>
</dbReference>
<dbReference type="SUPFAM" id="SSF48403">
    <property type="entry name" value="Ankyrin repeat"/>
    <property type="match status" value="1"/>
</dbReference>
<dbReference type="PROSITE" id="PS50297">
    <property type="entry name" value="ANK_REP_REGION"/>
    <property type="match status" value="1"/>
</dbReference>
<dbReference type="PROSITE" id="PS50088">
    <property type="entry name" value="ANK_REPEAT"/>
    <property type="match status" value="3"/>
</dbReference>
<gene>
    <name type="primary">kank2</name>
</gene>
<comment type="function">
    <text evidence="1 4">May be involved in different biological processes including transcription and apoptosis by sequestering specific proteins outside of the nucleus (By similarity). Involved in actin stress fibers formation probably through its interaction with ARHGDIA and the regulation of the Rho signaling pathway (By similarity). May thereby play a role in cell adhesion and migration, regulating for instance podocytes migration during development of the kidney (PubMed:25961457).</text>
</comment>
<comment type="subcellular location">
    <subcellularLocation>
        <location evidence="1">Cytoplasm</location>
    </subcellularLocation>
    <subcellularLocation>
        <location evidence="1">Mitochondrion</location>
    </subcellularLocation>
</comment>
<comment type="disruption phenotype">
    <text evidence="4">Morpholino knockdown of the protein results in an edematous phenotype and proteinuria (PubMed:25961457). Podocyte foot process effacement and disorganization, rarefaction of slit membranes, and disorganization of the glomerular basement membrane in glomeruli which are characteritic of nephrosis are observed (PubMed:25961457).</text>
</comment>
<organism>
    <name type="scientific">Danio rerio</name>
    <name type="common">Zebrafish</name>
    <name type="synonym">Brachydanio rerio</name>
    <dbReference type="NCBI Taxonomy" id="7955"/>
    <lineage>
        <taxon>Eukaryota</taxon>
        <taxon>Metazoa</taxon>
        <taxon>Chordata</taxon>
        <taxon>Craniata</taxon>
        <taxon>Vertebrata</taxon>
        <taxon>Euteleostomi</taxon>
        <taxon>Actinopterygii</taxon>
        <taxon>Neopterygii</taxon>
        <taxon>Teleostei</taxon>
        <taxon>Ostariophysi</taxon>
        <taxon>Cypriniformes</taxon>
        <taxon>Danionidae</taxon>
        <taxon>Danioninae</taxon>
        <taxon>Danio</taxon>
    </lineage>
</organism>
<evidence type="ECO:0000250" key="1">
    <source>
        <dbReference type="UniProtKB" id="Q63ZY3"/>
    </source>
</evidence>
<evidence type="ECO:0000255" key="2"/>
<evidence type="ECO:0000256" key="3">
    <source>
        <dbReference type="SAM" id="MobiDB-lite"/>
    </source>
</evidence>
<evidence type="ECO:0000269" key="4">
    <source>
    </source>
</evidence>
<sequence>MTIMAQVLHMDSSFPGKINPPVPPSLHAKDQEAPYSVETPYGYRLDLDFLKYVNDIEKGNTIKKVPVQRRPRYGSLPRGYGYTGSWWTSTESLCSNASMDSRHSSYSYCAPGFHTSQRPNFSTARVEKTLMDARRKLEEEKDGRRFSNLGSMHSSMAGSNTSLSSAHSFNRAQGGGSYTPMSSGLSTPVSPTPAHLQHVREQMAVALRKIRELEEQVKTIPVLQVKISVLQEEKRQLSVQLKSQKFLGHTLGFNRSRPRGELYIDIPEEEAGNGAGAANKATGSLSPTTPGSLQDSGCEIEETVIVAGARPGAKREVRTVGVGPEAEERGYRQVGVGVREQDLGLLPETEALKTKVGLLEVQLRKTMQELQSAQQQVEAAQKERQTVCPQVDHAVRATSLGWQDQQGQAGAGLHTVVSFTKQPHQQRTVGIQVYTLEQPTVVGVGTLLRAQGCTHPAQLEASHRRYGESPAAGDSPHEFPIAISSKQVREVLRSEVSKSVPVTNQATPMETKCNQVTAVCQRLKEGEINQQPAEEAIQVDPANPASPQSNLRSIMKRKADGEPGSPYTKKNLQFLGVNGGYESTSSEESSSESSEDESDASEYHEATEKLPESATPQSLVSSCIPQLASETPATQTAQHSTAQIPTNHTPAAQTTSQSHTTDATTQQHVTQSPAAEADVQHCVSQSSVTTTPPPEGDVQCVFQGCNPPSTATSLEQNSVQLSSATQQSKATDSNVQPDLAQTDVSDFAAQQTTTQTQFTSAKPQQEASQSKTADLTAQKGATHSTDGSAKQDIAISSTTKPAADTATPPTNKQTDSLELSGGLMSALHILQKALSEPNAFSHQDARTAYTSVLQEWLRVSCHKAADTAVVKAHMDAFASISPQLLEFVINMADGNGNTALHYTVSHSNFPVVKLLLDTGLCNADKQNKAGYTAIMLTALAAFSSDSDLQTVLQLLRTGDVNAKASQAGQTALMLAVSHGRGDMVKALLACGAQVNLRDDDGSTALMCACEHGHVDIVRQLLSVPGCDATLTDNDGSTALSIALEASQNDIAVLLYAHLNFAKPPSPVSPKSPILGSSPPSSSELK</sequence>
<feature type="chain" id="PRO_0000445622" description="KN motif and ankyrin repeat domain-containing protein 2">
    <location>
        <begin position="1"/>
        <end position="1085"/>
    </location>
</feature>
<feature type="repeat" description="ANK 1" evidence="2">
    <location>
        <begin position="895"/>
        <end position="925"/>
    </location>
</feature>
<feature type="repeat" description="ANK 2" evidence="2">
    <location>
        <begin position="929"/>
        <end position="962"/>
    </location>
</feature>
<feature type="repeat" description="ANK 3" evidence="2">
    <location>
        <begin position="967"/>
        <end position="996"/>
    </location>
</feature>
<feature type="repeat" description="ANK 4" evidence="2">
    <location>
        <begin position="1000"/>
        <end position="1030"/>
    </location>
</feature>
<feature type="repeat" description="ANK 5" evidence="2">
    <location>
        <begin position="1034"/>
        <end position="1063"/>
    </location>
</feature>
<feature type="region of interest" description="Disordered" evidence="3">
    <location>
        <begin position="136"/>
        <end position="192"/>
    </location>
</feature>
<feature type="region of interest" description="Disordered" evidence="3">
    <location>
        <begin position="273"/>
        <end position="295"/>
    </location>
</feature>
<feature type="region of interest" description="Disordered" evidence="3">
    <location>
        <begin position="557"/>
        <end position="736"/>
    </location>
</feature>
<feature type="region of interest" description="Disordered" evidence="3">
    <location>
        <begin position="752"/>
        <end position="791"/>
    </location>
</feature>
<feature type="region of interest" description="Disordered" evidence="3">
    <location>
        <begin position="798"/>
        <end position="817"/>
    </location>
</feature>
<feature type="region of interest" description="Disordered" evidence="3">
    <location>
        <begin position="1064"/>
        <end position="1085"/>
    </location>
</feature>
<feature type="coiled-coil region" evidence="2">
    <location>
        <begin position="196"/>
        <end position="216"/>
    </location>
</feature>
<feature type="coiled-coil region" evidence="2">
    <location>
        <begin position="356"/>
        <end position="383"/>
    </location>
</feature>
<feature type="compositionally biased region" description="Basic and acidic residues" evidence="3">
    <location>
        <begin position="136"/>
        <end position="145"/>
    </location>
</feature>
<feature type="compositionally biased region" description="Polar residues" evidence="3">
    <location>
        <begin position="148"/>
        <end position="171"/>
    </location>
</feature>
<feature type="compositionally biased region" description="Polar residues" evidence="3">
    <location>
        <begin position="179"/>
        <end position="189"/>
    </location>
</feature>
<feature type="compositionally biased region" description="Polar residues" evidence="3">
    <location>
        <begin position="281"/>
        <end position="295"/>
    </location>
</feature>
<feature type="compositionally biased region" description="Acidic residues" evidence="3">
    <location>
        <begin position="589"/>
        <end position="600"/>
    </location>
</feature>
<feature type="compositionally biased region" description="Basic and acidic residues" evidence="3">
    <location>
        <begin position="601"/>
        <end position="611"/>
    </location>
</feature>
<feature type="compositionally biased region" description="Polar residues" evidence="3">
    <location>
        <begin position="614"/>
        <end position="648"/>
    </location>
</feature>
<feature type="compositionally biased region" description="Low complexity" evidence="3">
    <location>
        <begin position="649"/>
        <end position="668"/>
    </location>
</feature>
<feature type="compositionally biased region" description="Polar residues" evidence="3">
    <location>
        <begin position="706"/>
        <end position="736"/>
    </location>
</feature>
<feature type="compositionally biased region" description="Polar residues" evidence="3">
    <location>
        <begin position="760"/>
        <end position="788"/>
    </location>
</feature>
<feature type="compositionally biased region" description="Low complexity" evidence="3">
    <location>
        <begin position="798"/>
        <end position="810"/>
    </location>
</feature>
<feature type="compositionally biased region" description="Low complexity" evidence="3">
    <location>
        <begin position="1070"/>
        <end position="1085"/>
    </location>
</feature>
<reference key="1">
    <citation type="journal article" date="2013" name="Nature">
        <title>The zebrafish reference genome sequence and its relationship to the human genome.</title>
        <authorList>
            <person name="Howe K."/>
            <person name="Clark M.D."/>
            <person name="Torroja C.F."/>
            <person name="Torrance J."/>
            <person name="Berthelot C."/>
            <person name="Muffato M."/>
            <person name="Collins J.E."/>
            <person name="Humphray S."/>
            <person name="McLaren K."/>
            <person name="Matthews L."/>
            <person name="McLaren S."/>
            <person name="Sealy I."/>
            <person name="Caccamo M."/>
            <person name="Churcher C."/>
            <person name="Scott C."/>
            <person name="Barrett J.C."/>
            <person name="Koch R."/>
            <person name="Rauch G.J."/>
            <person name="White S."/>
            <person name="Chow W."/>
            <person name="Kilian B."/>
            <person name="Quintais L.T."/>
            <person name="Guerra-Assuncao J.A."/>
            <person name="Zhou Y."/>
            <person name="Gu Y."/>
            <person name="Yen J."/>
            <person name="Vogel J.H."/>
            <person name="Eyre T."/>
            <person name="Redmond S."/>
            <person name="Banerjee R."/>
            <person name="Chi J."/>
            <person name="Fu B."/>
            <person name="Langley E."/>
            <person name="Maguire S.F."/>
            <person name="Laird G.K."/>
            <person name="Lloyd D."/>
            <person name="Kenyon E."/>
            <person name="Donaldson S."/>
            <person name="Sehra H."/>
            <person name="Almeida-King J."/>
            <person name="Loveland J."/>
            <person name="Trevanion S."/>
            <person name="Jones M."/>
            <person name="Quail M."/>
            <person name="Willey D."/>
            <person name="Hunt A."/>
            <person name="Burton J."/>
            <person name="Sims S."/>
            <person name="McLay K."/>
            <person name="Plumb B."/>
            <person name="Davis J."/>
            <person name="Clee C."/>
            <person name="Oliver K."/>
            <person name="Clark R."/>
            <person name="Riddle C."/>
            <person name="Elliot D."/>
            <person name="Threadgold G."/>
            <person name="Harden G."/>
            <person name="Ware D."/>
            <person name="Begum S."/>
            <person name="Mortimore B."/>
            <person name="Kerry G."/>
            <person name="Heath P."/>
            <person name="Phillimore B."/>
            <person name="Tracey A."/>
            <person name="Corby N."/>
            <person name="Dunn M."/>
            <person name="Johnson C."/>
            <person name="Wood J."/>
            <person name="Clark S."/>
            <person name="Pelan S."/>
            <person name="Griffiths G."/>
            <person name="Smith M."/>
            <person name="Glithero R."/>
            <person name="Howden P."/>
            <person name="Barker N."/>
            <person name="Lloyd C."/>
            <person name="Stevens C."/>
            <person name="Harley J."/>
            <person name="Holt K."/>
            <person name="Panagiotidis G."/>
            <person name="Lovell J."/>
            <person name="Beasley H."/>
            <person name="Henderson C."/>
            <person name="Gordon D."/>
            <person name="Auger K."/>
            <person name="Wright D."/>
            <person name="Collins J."/>
            <person name="Raisen C."/>
            <person name="Dyer L."/>
            <person name="Leung K."/>
            <person name="Robertson L."/>
            <person name="Ambridge K."/>
            <person name="Leongamornlert D."/>
            <person name="McGuire S."/>
            <person name="Gilderthorp R."/>
            <person name="Griffiths C."/>
            <person name="Manthravadi D."/>
            <person name="Nichol S."/>
            <person name="Barker G."/>
            <person name="Whitehead S."/>
            <person name="Kay M."/>
            <person name="Brown J."/>
            <person name="Murnane C."/>
            <person name="Gray E."/>
            <person name="Humphries M."/>
            <person name="Sycamore N."/>
            <person name="Barker D."/>
            <person name="Saunders D."/>
            <person name="Wallis J."/>
            <person name="Babbage A."/>
            <person name="Hammond S."/>
            <person name="Mashreghi-Mohammadi M."/>
            <person name="Barr L."/>
            <person name="Martin S."/>
            <person name="Wray P."/>
            <person name="Ellington A."/>
            <person name="Matthews N."/>
            <person name="Ellwood M."/>
            <person name="Woodmansey R."/>
            <person name="Clark G."/>
            <person name="Cooper J."/>
            <person name="Tromans A."/>
            <person name="Grafham D."/>
            <person name="Skuce C."/>
            <person name="Pandian R."/>
            <person name="Andrews R."/>
            <person name="Harrison E."/>
            <person name="Kimberley A."/>
            <person name="Garnett J."/>
            <person name="Fosker N."/>
            <person name="Hall R."/>
            <person name="Garner P."/>
            <person name="Kelly D."/>
            <person name="Bird C."/>
            <person name="Palmer S."/>
            <person name="Gehring I."/>
            <person name="Berger A."/>
            <person name="Dooley C.M."/>
            <person name="Ersan-Urun Z."/>
            <person name="Eser C."/>
            <person name="Geiger H."/>
            <person name="Geisler M."/>
            <person name="Karotki L."/>
            <person name="Kirn A."/>
            <person name="Konantz J."/>
            <person name="Konantz M."/>
            <person name="Oberlander M."/>
            <person name="Rudolph-Geiger S."/>
            <person name="Teucke M."/>
            <person name="Lanz C."/>
            <person name="Raddatz G."/>
            <person name="Osoegawa K."/>
            <person name="Zhu B."/>
            <person name="Rapp A."/>
            <person name="Widaa S."/>
            <person name="Langford C."/>
            <person name="Yang F."/>
            <person name="Schuster S.C."/>
            <person name="Carter N.P."/>
            <person name="Harrow J."/>
            <person name="Ning Z."/>
            <person name="Herrero J."/>
            <person name="Searle S.M."/>
            <person name="Enright A."/>
            <person name="Geisler R."/>
            <person name="Plasterk R.H."/>
            <person name="Lee C."/>
            <person name="Westerfield M."/>
            <person name="de Jong P.J."/>
            <person name="Zon L.I."/>
            <person name="Postlethwait J.H."/>
            <person name="Nusslein-Volhard C."/>
            <person name="Hubbard T.J."/>
            <person name="Roest Crollius H."/>
            <person name="Rogers J."/>
            <person name="Stemple D.L."/>
        </authorList>
    </citation>
    <scope>NUCLEOTIDE SEQUENCE [LARGE SCALE GENOMIC DNA]</scope>
    <source>
        <strain>Tuebingen</strain>
    </source>
</reference>
<reference key="2">
    <citation type="journal article" date="2015" name="J. Clin. Invest.">
        <title>KANK deficiency leads to podocyte dysfunction and nephrotic syndrome.</title>
        <authorList>
            <person name="Gee H.Y."/>
            <person name="Zhang F."/>
            <person name="Ashraf S."/>
            <person name="Kohl S."/>
            <person name="Sadowski C.E."/>
            <person name="Vega-Warner V."/>
            <person name="Zhou W."/>
            <person name="Lovric S."/>
            <person name="Fang H."/>
            <person name="Nettleton M."/>
            <person name="Zhu J.Y."/>
            <person name="Hoefele J."/>
            <person name="Weber L.T."/>
            <person name="Podracka L."/>
            <person name="Boor A."/>
            <person name="Fehrenbach H."/>
            <person name="Innis J.W."/>
            <person name="Washburn J."/>
            <person name="Levy S."/>
            <person name="Lifton R.P."/>
            <person name="Otto E.A."/>
            <person name="Han Z."/>
            <person name="Hildebrandt F."/>
        </authorList>
    </citation>
    <scope>FUNCTION</scope>
    <scope>DISRUPTION PHENOTYPE</scope>
</reference>